<reference key="1">
    <citation type="journal article" date="2007" name="Science">
        <title>Genome sequence of Aedes aegypti, a major arbovirus vector.</title>
        <authorList>
            <person name="Nene V."/>
            <person name="Wortman J.R."/>
            <person name="Lawson D."/>
            <person name="Haas B.J."/>
            <person name="Kodira C.D."/>
            <person name="Tu Z.J."/>
            <person name="Loftus B.J."/>
            <person name="Xi Z."/>
            <person name="Megy K."/>
            <person name="Grabherr M."/>
            <person name="Ren Q."/>
            <person name="Zdobnov E.M."/>
            <person name="Lobo N.F."/>
            <person name="Campbell K.S."/>
            <person name="Brown S.E."/>
            <person name="Bonaldo M.F."/>
            <person name="Zhu J."/>
            <person name="Sinkins S.P."/>
            <person name="Hogenkamp D.G."/>
            <person name="Amedeo P."/>
            <person name="Arensburger P."/>
            <person name="Atkinson P.W."/>
            <person name="Bidwell S.L."/>
            <person name="Biedler J."/>
            <person name="Birney E."/>
            <person name="Bruggner R.V."/>
            <person name="Costas J."/>
            <person name="Coy M.R."/>
            <person name="Crabtree J."/>
            <person name="Crawford M."/>
            <person name="DeBruyn B."/>
            <person name="DeCaprio D."/>
            <person name="Eiglmeier K."/>
            <person name="Eisenstadt E."/>
            <person name="El-Dorry H."/>
            <person name="Gelbart W.M."/>
            <person name="Gomes S.L."/>
            <person name="Hammond M."/>
            <person name="Hannick L.I."/>
            <person name="Hogan J.R."/>
            <person name="Holmes M.H."/>
            <person name="Jaffe D."/>
            <person name="Johnston S.J."/>
            <person name="Kennedy R.C."/>
            <person name="Koo H."/>
            <person name="Kravitz S."/>
            <person name="Kriventseva E.V."/>
            <person name="Kulp D."/>
            <person name="Labutti K."/>
            <person name="Lee E."/>
            <person name="Li S."/>
            <person name="Lovin D.D."/>
            <person name="Mao C."/>
            <person name="Mauceli E."/>
            <person name="Menck C.F."/>
            <person name="Miller J.R."/>
            <person name="Montgomery P."/>
            <person name="Mori A."/>
            <person name="Nascimento A.L."/>
            <person name="Naveira H.F."/>
            <person name="Nusbaum C."/>
            <person name="O'Leary S.B."/>
            <person name="Orvis J."/>
            <person name="Pertea M."/>
            <person name="Quesneville H."/>
            <person name="Reidenbach K.R."/>
            <person name="Rogers Y.-H.C."/>
            <person name="Roth C.W."/>
            <person name="Schneider J.R."/>
            <person name="Schatz M."/>
            <person name="Shumway M."/>
            <person name="Stanke M."/>
            <person name="Stinson E.O."/>
            <person name="Tubio J.M.C."/>
            <person name="Vanzee J.P."/>
            <person name="Verjovski-Almeida S."/>
            <person name="Werner D."/>
            <person name="White O.R."/>
            <person name="Wyder S."/>
            <person name="Zeng Q."/>
            <person name="Zhao Q."/>
            <person name="Zhao Y."/>
            <person name="Hill C.A."/>
            <person name="Raikhel A.S."/>
            <person name="Soares M.B."/>
            <person name="Knudson D.L."/>
            <person name="Lee N.H."/>
            <person name="Galagan J."/>
            <person name="Salzberg S.L."/>
            <person name="Paulsen I.T."/>
            <person name="Dimopoulos G."/>
            <person name="Collins F.H."/>
            <person name="Bruce B."/>
            <person name="Fraser-Liggett C.M."/>
            <person name="Severson D.W."/>
        </authorList>
    </citation>
    <scope>NUCLEOTIDE SEQUENCE [LARGE SCALE GENOMIC DNA]</scope>
    <source>
        <strain>LVPib12</strain>
    </source>
</reference>
<evidence type="ECO:0000250" key="1">
    <source>
        <dbReference type="UniProtKB" id="A0A061I403"/>
    </source>
</evidence>
<evidence type="ECO:0000250" key="2">
    <source>
        <dbReference type="UniProtKB" id="Q8SWV6"/>
    </source>
</evidence>
<evidence type="ECO:0000250" key="3">
    <source>
        <dbReference type="UniProtKB" id="Q9BVA6"/>
    </source>
</evidence>
<evidence type="ECO:0000255" key="4"/>
<evidence type="ECO:0000255" key="5">
    <source>
        <dbReference type="PROSITE-ProRule" id="PRU00791"/>
    </source>
</evidence>
<evidence type="ECO:0000305" key="6"/>
<proteinExistence type="inferred from homology"/>
<dbReference type="EC" id="2.7.7.108" evidence="2"/>
<dbReference type="EC" id="3.1.4.-" evidence="1 2"/>
<dbReference type="EMBL" id="CH477339">
    <property type="protein sequence ID" value="EAT43151.1"/>
    <property type="molecule type" value="Genomic_DNA"/>
</dbReference>
<dbReference type="SMR" id="Q17A75"/>
<dbReference type="FunCoup" id="Q17A75">
    <property type="interactions" value="246"/>
</dbReference>
<dbReference type="STRING" id="7159.Q17A75"/>
<dbReference type="PaxDb" id="7159-AAEL005383-PA"/>
<dbReference type="EnsemblMetazoa" id="AAEL005383-RA">
    <property type="protein sequence ID" value="AAEL005383-PA"/>
    <property type="gene ID" value="AAEL005383"/>
</dbReference>
<dbReference type="GeneID" id="5566424"/>
<dbReference type="KEGG" id="aag:5566424"/>
<dbReference type="CTD" id="33897"/>
<dbReference type="VEuPathDB" id="VectorBase:AAEL005383"/>
<dbReference type="eggNOG" id="KOG3824">
    <property type="taxonomic scope" value="Eukaryota"/>
</dbReference>
<dbReference type="HOGENOM" id="CLU_040460_0_0_1"/>
<dbReference type="InParanoid" id="Q17A75"/>
<dbReference type="OMA" id="QLRCQLW"/>
<dbReference type="OrthoDB" id="439046at2759"/>
<dbReference type="PhylomeDB" id="Q17A75"/>
<dbReference type="Proteomes" id="UP000008820">
    <property type="component" value="Chromosome 2"/>
</dbReference>
<dbReference type="Proteomes" id="UP000682892">
    <property type="component" value="Unassembled WGS sequence"/>
</dbReference>
<dbReference type="GO" id="GO:0016020">
    <property type="term" value="C:membrane"/>
    <property type="evidence" value="ECO:0007669"/>
    <property type="project" value="UniProtKB-SubCell"/>
</dbReference>
<dbReference type="GO" id="GO:0070733">
    <property type="term" value="F:AMPylase activity"/>
    <property type="evidence" value="ECO:0000250"/>
    <property type="project" value="UniProtKB"/>
</dbReference>
<dbReference type="GO" id="GO:0005524">
    <property type="term" value="F:ATP binding"/>
    <property type="evidence" value="ECO:0007669"/>
    <property type="project" value="UniProtKB-KW"/>
</dbReference>
<dbReference type="GO" id="GO:0016787">
    <property type="term" value="F:hydrolase activity"/>
    <property type="evidence" value="ECO:0007669"/>
    <property type="project" value="UniProtKB-KW"/>
</dbReference>
<dbReference type="GO" id="GO:0018117">
    <property type="term" value="P:protein adenylylation"/>
    <property type="evidence" value="ECO:0000250"/>
    <property type="project" value="UniProtKB"/>
</dbReference>
<dbReference type="FunFam" id="1.10.3290.10:FF:000001">
    <property type="entry name" value="adenosine monophosphate-protein transferase FICD"/>
    <property type="match status" value="1"/>
</dbReference>
<dbReference type="FunFam" id="1.25.40.10:FF:000522">
    <property type="entry name" value="Protein adenylyltransferase Fic"/>
    <property type="match status" value="1"/>
</dbReference>
<dbReference type="Gene3D" id="1.10.3290.10">
    <property type="entry name" value="Fido-like domain"/>
    <property type="match status" value="1"/>
</dbReference>
<dbReference type="Gene3D" id="1.25.40.10">
    <property type="entry name" value="Tetratricopeptide repeat domain"/>
    <property type="match status" value="1"/>
</dbReference>
<dbReference type="InterPro" id="IPR003812">
    <property type="entry name" value="Fido"/>
</dbReference>
<dbReference type="InterPro" id="IPR036597">
    <property type="entry name" value="Fido-like_dom_sf"/>
</dbReference>
<dbReference type="InterPro" id="IPR040198">
    <property type="entry name" value="Fido_containing"/>
</dbReference>
<dbReference type="InterPro" id="IPR011990">
    <property type="entry name" value="TPR-like_helical_dom_sf"/>
</dbReference>
<dbReference type="PANTHER" id="PTHR13504">
    <property type="entry name" value="FIDO DOMAIN-CONTAINING PROTEIN DDB_G0283145"/>
    <property type="match status" value="1"/>
</dbReference>
<dbReference type="PANTHER" id="PTHR13504:SF34">
    <property type="entry name" value="PROTEIN ADENYLYLTRANSFERASE FICD"/>
    <property type="match status" value="1"/>
</dbReference>
<dbReference type="Pfam" id="PF02661">
    <property type="entry name" value="Fic"/>
    <property type="match status" value="1"/>
</dbReference>
<dbReference type="SUPFAM" id="SSF140931">
    <property type="entry name" value="Fic-like"/>
    <property type="match status" value="1"/>
</dbReference>
<dbReference type="SUPFAM" id="SSF48452">
    <property type="entry name" value="TPR-like"/>
    <property type="match status" value="1"/>
</dbReference>
<dbReference type="PROSITE" id="PS51459">
    <property type="entry name" value="FIDO"/>
    <property type="match status" value="1"/>
</dbReference>
<dbReference type="PROSITE" id="PS50293">
    <property type="entry name" value="TPR_REGION"/>
    <property type="match status" value="1"/>
</dbReference>
<accession>Q17A75</accession>
<sequence>MCCVCGEQSPDLKNGLQKQSRSARRSASKKWRYQMNSFHYFVIFASGSLFSGLMFGLLNYAPKYVLLPTRSAPHHLPDGKFLQISDEARVMEPYFPAVRMAGRLGDGNNGSGKIRTEPHDTNEQEALSSLKVAIEMKTMGKDDKAARLFQHALALSPKHPEILTKYGEFLEHNQQDVVRADHYYYQALTVNPSHSEALANRQRTAQIVEHLDQKRFERLDQKRDALSSVSDTNMALKRAEKEAYIQHIYHSVGIEGNTMSLAQTRSILETRMAVDGKSIDEHNEILGLDAAMKYINATLVNKNDFITLKDILEIHRRVLGHVDPIEGGEFRRSQVYVGGHVPPGPGDLSILMNHFESWLNSKQAFLFHPVKYAAMAHYKLVHIHPFSDGNGRTSRLLMNTLLMRAGYPPVIIQKQHRHKYYDYLQVANEGDIRPFVRFIADCTERTLDLYLWATSELSHPVPLLAQETMPDGVPLINSFEKESTIEGSGAGEAIRIGTI</sequence>
<organism>
    <name type="scientific">Aedes aegypti</name>
    <name type="common">Yellowfever mosquito</name>
    <name type="synonym">Culex aegypti</name>
    <dbReference type="NCBI Taxonomy" id="7159"/>
    <lineage>
        <taxon>Eukaryota</taxon>
        <taxon>Metazoa</taxon>
        <taxon>Ecdysozoa</taxon>
        <taxon>Arthropoda</taxon>
        <taxon>Hexapoda</taxon>
        <taxon>Insecta</taxon>
        <taxon>Pterygota</taxon>
        <taxon>Neoptera</taxon>
        <taxon>Endopterygota</taxon>
        <taxon>Diptera</taxon>
        <taxon>Nematocera</taxon>
        <taxon>Culicoidea</taxon>
        <taxon>Culicidae</taxon>
        <taxon>Culicinae</taxon>
        <taxon>Aedini</taxon>
        <taxon>Aedes</taxon>
        <taxon>Stegomyia</taxon>
    </lineage>
</organism>
<keyword id="KW-0067">ATP-binding</keyword>
<keyword id="KW-0378">Hydrolase</keyword>
<keyword id="KW-0472">Membrane</keyword>
<keyword id="KW-0547">Nucleotide-binding</keyword>
<keyword id="KW-0548">Nucleotidyltransferase</keyword>
<keyword id="KW-1185">Reference proteome</keyword>
<keyword id="KW-0677">Repeat</keyword>
<keyword id="KW-0802">TPR repeat</keyword>
<keyword id="KW-0808">Transferase</keyword>
<keyword id="KW-0812">Transmembrane</keyword>
<keyword id="KW-1133">Transmembrane helix</keyword>
<gene>
    <name type="ORF">AAEL005383</name>
</gene>
<comment type="function">
    <text evidence="1 2">Protein that can both mediate the addition of adenosine 5'-monophosphate (AMP) to specific residues of target proteins (AMPylation), and the removal of the same modification from target proteins (de-AMPylation), depending on the context (By similarity). The side chain of Glu-255 determines which of the two opposing activities (AMPylase or de-AMPylase) will take place (By similarity). Acts as a key regulator of the unfolded protein response (UPR) by mediating AMPylation or de-AMPylation of Hsc70-3/BiP. In unstressed cells, acts as an adenylyltransferase by mediating AMPylation of Hsc70-3/BiP at 'Thr-518', thereby inactivating it. In response to endoplasmic reticulum stress, acts as a phosphodiesterase by mediating removal of ATP (de-AMPylation) from Hsc70-3/BiP at 'Thr-518', leading to restore HSPA5/BiP activity (By similarity).</text>
</comment>
<comment type="catalytic activity">
    <reaction evidence="3">
        <text>L-tyrosyl-[protein] + ATP = O-(5'-adenylyl)-L-tyrosyl-[protein] + diphosphate</text>
        <dbReference type="Rhea" id="RHEA:54288"/>
        <dbReference type="Rhea" id="RHEA-COMP:10136"/>
        <dbReference type="Rhea" id="RHEA-COMP:13846"/>
        <dbReference type="ChEBI" id="CHEBI:30616"/>
        <dbReference type="ChEBI" id="CHEBI:33019"/>
        <dbReference type="ChEBI" id="CHEBI:46858"/>
        <dbReference type="ChEBI" id="CHEBI:83624"/>
        <dbReference type="EC" id="2.7.7.108"/>
    </reaction>
</comment>
<comment type="catalytic activity">
    <reaction evidence="2">
        <text>L-threonyl-[protein] + ATP = 3-O-(5'-adenylyl)-L-threonyl-[protein] + diphosphate</text>
        <dbReference type="Rhea" id="RHEA:54292"/>
        <dbReference type="Rhea" id="RHEA-COMP:11060"/>
        <dbReference type="Rhea" id="RHEA-COMP:13847"/>
        <dbReference type="ChEBI" id="CHEBI:30013"/>
        <dbReference type="ChEBI" id="CHEBI:30616"/>
        <dbReference type="ChEBI" id="CHEBI:33019"/>
        <dbReference type="ChEBI" id="CHEBI:138113"/>
        <dbReference type="EC" id="2.7.7.108"/>
    </reaction>
</comment>
<comment type="catalytic activity">
    <reaction evidence="2">
        <text>3-O-(5'-adenylyl)-L-threonyl-[protein] + H2O = L-threonyl-[protein] + AMP + H(+)</text>
        <dbReference type="Rhea" id="RHEA:55932"/>
        <dbReference type="Rhea" id="RHEA-COMP:11060"/>
        <dbReference type="Rhea" id="RHEA-COMP:13847"/>
        <dbReference type="ChEBI" id="CHEBI:15377"/>
        <dbReference type="ChEBI" id="CHEBI:15378"/>
        <dbReference type="ChEBI" id="CHEBI:30013"/>
        <dbReference type="ChEBI" id="CHEBI:138113"/>
        <dbReference type="ChEBI" id="CHEBI:456215"/>
    </reaction>
</comment>
<comment type="activity regulation">
    <text evidence="1 3">The side chain of Glu-255 determines which of the two opposing activities (AMPylase or de-AMPylase) will take place. In response to endoplasmic reticulum stress, mediates de-AMPylase activity (By similarity). Adenylyltransferase activity is inhibited by the inhibitory helix present at the N-terminus: Glu-255 binds ATP and competes with ATP-binding at Arg-395, thereby preventing adenylyltransferase activity (By similarity). In unstressed cells, disengagement of Glu-255 promotes adenylyltransferase activity (By similarity). Activation dissociates ATP-binding from Glu-255, allowing ordered binding of the entire ATP moiety with the alpha-phosphate in an orientation that is productive for accepting an incoming target hydroxyl side chain (By similarity).</text>
</comment>
<comment type="subunit">
    <text evidence="2">Homodimer.</text>
</comment>
<comment type="subcellular location">
    <subcellularLocation>
        <location evidence="2">Membrane</location>
        <topology evidence="2">Single-pass membrane protein</topology>
    </subcellularLocation>
</comment>
<comment type="domain">
    <text evidence="3">The fido domain mediates the adenylyltransferase activity.</text>
</comment>
<comment type="similarity">
    <text evidence="6">Belongs to the fic family.</text>
</comment>
<protein>
    <recommendedName>
        <fullName>Protein adenylyltransferase Fic</fullName>
        <ecNumber evidence="2">2.7.7.108</ecNumber>
    </recommendedName>
    <alternativeName>
        <fullName evidence="6">De-AMPylase Fic</fullName>
        <ecNumber evidence="1 2">3.1.4.-</ecNumber>
    </alternativeName>
</protein>
<name>FICD_AEDAE</name>
<feature type="chain" id="PRO_0000381780" description="Protein adenylyltransferase Fic">
    <location>
        <begin position="1"/>
        <end position="499"/>
    </location>
</feature>
<feature type="transmembrane region" description="Helical" evidence="4">
    <location>
        <begin position="38"/>
        <end position="58"/>
    </location>
</feature>
<feature type="repeat" description="TPR 1">
    <location>
        <begin position="126"/>
        <end position="159"/>
    </location>
</feature>
<feature type="repeat" description="TPR 2">
    <location>
        <begin position="160"/>
        <end position="194"/>
    </location>
</feature>
<feature type="domain" description="Fido" evidence="5">
    <location>
        <begin position="306"/>
        <end position="441"/>
    </location>
</feature>
<feature type="short sequence motif" description="Inhibitory (S/T)XXXE(G/N) motif">
    <location>
        <begin position="251"/>
        <end position="256"/>
    </location>
</feature>
<feature type="active site" evidence="1">
    <location>
        <position position="384"/>
    </location>
</feature>
<feature type="binding site" evidence="3">
    <location>
        <position position="255"/>
    </location>
    <ligand>
        <name>ATP</name>
        <dbReference type="ChEBI" id="CHEBI:30616"/>
    </ligand>
</feature>
<feature type="binding site" evidence="3">
    <location>
        <begin position="337"/>
        <end position="340"/>
    </location>
    <ligand>
        <name>ATP</name>
        <dbReference type="ChEBI" id="CHEBI:30616"/>
    </ligand>
</feature>
<feature type="binding site" evidence="3">
    <location>
        <begin position="388"/>
        <end position="395"/>
    </location>
    <ligand>
        <name>ATP</name>
        <dbReference type="ChEBI" id="CHEBI:30616"/>
    </ligand>
</feature>
<feature type="binding site" evidence="3">
    <location>
        <begin position="420"/>
        <end position="421"/>
    </location>
    <ligand>
        <name>ATP</name>
        <dbReference type="ChEBI" id="CHEBI:30616"/>
    </ligand>
</feature>
<feature type="binding site" evidence="3">
    <location>
        <position position="428"/>
    </location>
    <ligand>
        <name>ATP</name>
        <dbReference type="ChEBI" id="CHEBI:30616"/>
    </ligand>
</feature>
<feature type="site" description="Important for autoinhibition of adenylyltransferase activity" evidence="3">
    <location>
        <position position="255"/>
    </location>
</feature>